<proteinExistence type="evidence at protein level"/>
<organism>
    <name type="scientific">Arthroderma benhamiae (strain ATCC MYA-4681 / CBS 112371)</name>
    <name type="common">Trichophyton mentagrophytes</name>
    <dbReference type="NCBI Taxonomy" id="663331"/>
    <lineage>
        <taxon>Eukaryota</taxon>
        <taxon>Fungi</taxon>
        <taxon>Dikarya</taxon>
        <taxon>Ascomycota</taxon>
        <taxon>Pezizomycotina</taxon>
        <taxon>Eurotiomycetes</taxon>
        <taxon>Eurotiomycetidae</taxon>
        <taxon>Onygenales</taxon>
        <taxon>Arthrodermataceae</taxon>
        <taxon>Trichophyton</taxon>
    </lineage>
</organism>
<gene>
    <name type="ORF">ARB_01751</name>
</gene>
<evidence type="ECO:0000250" key="1">
    <source>
        <dbReference type="UniProtKB" id="Q13093"/>
    </source>
</evidence>
<evidence type="ECO:0000255" key="2"/>
<evidence type="ECO:0000255" key="3">
    <source>
        <dbReference type="PROSITE-ProRule" id="PRU00498"/>
    </source>
</evidence>
<evidence type="ECO:0000269" key="4">
    <source>
    </source>
</evidence>
<evidence type="ECO:0000305" key="5"/>
<protein>
    <recommendedName>
        <fullName evidence="1">Probable 1-alkyl-2-acetylglycerophosphocholine esterase</fullName>
        <ecNumber evidence="1">3.1.1.47</ecNumber>
    </recommendedName>
</protein>
<feature type="signal peptide" evidence="2">
    <location>
        <begin position="1"/>
        <end position="17"/>
    </location>
</feature>
<feature type="chain" id="PRO_0000434479" description="Probable 1-alkyl-2-acetylglycerophosphocholine esterase" evidence="2">
    <location>
        <begin position="18"/>
        <end position="387"/>
    </location>
</feature>
<feature type="active site" description="Nucleophile" evidence="1">
    <location>
        <position position="227"/>
    </location>
</feature>
<feature type="active site" description="Charge relay system" evidence="1">
    <location>
        <position position="250"/>
    </location>
</feature>
<feature type="active site" description="Charge relay system" evidence="1">
    <location>
        <position position="313"/>
    </location>
</feature>
<feature type="glycosylation site" description="N-linked (GlcNAc...) asparagine" evidence="3">
    <location>
        <position position="51"/>
    </location>
</feature>
<feature type="glycosylation site" description="N-linked (GlcNAc...) asparagine" evidence="3">
    <location>
        <position position="141"/>
    </location>
</feature>
<feature type="glycosylation site" description="N-linked (GlcNAc...) asparagine" evidence="3">
    <location>
        <position position="283"/>
    </location>
</feature>
<accession>D4AZY1</accession>
<reference key="1">
    <citation type="journal article" date="2011" name="Genome Biol.">
        <title>Comparative and functional genomics provide insights into the pathogenicity of dermatophytic fungi.</title>
        <authorList>
            <person name="Burmester A."/>
            <person name="Shelest E."/>
            <person name="Gloeckner G."/>
            <person name="Heddergott C."/>
            <person name="Schindler S."/>
            <person name="Staib P."/>
            <person name="Heidel A."/>
            <person name="Felder M."/>
            <person name="Petzold A."/>
            <person name="Szafranski K."/>
            <person name="Feuermann M."/>
            <person name="Pedruzzi I."/>
            <person name="Priebe S."/>
            <person name="Groth M."/>
            <person name="Winkler R."/>
            <person name="Li W."/>
            <person name="Kniemeyer O."/>
            <person name="Schroeckh V."/>
            <person name="Hertweck C."/>
            <person name="Hube B."/>
            <person name="White T.C."/>
            <person name="Platzer M."/>
            <person name="Guthke R."/>
            <person name="Heitman J."/>
            <person name="Woestemeyer J."/>
            <person name="Zipfel P.F."/>
            <person name="Monod M."/>
            <person name="Brakhage A.A."/>
        </authorList>
    </citation>
    <scope>NUCLEOTIDE SEQUENCE [LARGE SCALE GENOMIC DNA]</scope>
    <source>
        <strain>ATCC MYA-4681 / CBS 112371</strain>
    </source>
</reference>
<reference key="2">
    <citation type="journal article" date="2011" name="Proteomics">
        <title>Identification of novel secreted proteases during extracellular proteolysis by dermatophytes at acidic pH.</title>
        <authorList>
            <person name="Sriranganadane D."/>
            <person name="Waridel P."/>
            <person name="Salamin K."/>
            <person name="Feuermann M."/>
            <person name="Mignon B."/>
            <person name="Staib P."/>
            <person name="Neuhaus J.M."/>
            <person name="Quadroni M."/>
            <person name="Monod M."/>
        </authorList>
    </citation>
    <scope>IDENTIFICATION BY MASS SPECTROMETRY</scope>
    <scope>SUBCELLULAR LOCATION</scope>
</reference>
<sequence length="387" mass="42265">MLVQGTIICALVANAIASSIPSSFLLPEPSGPFKVQREILELTDWSRKDINSTLPRRLMVSRFNPIPEKHCIRTEDVPTFPPASAKLEDAILQAASGGHWVDGLLAASRIRVCADVKKGYQTDSHGDNHGIPILLFSPGGNTTRLVYSSIAQTISSAGYTVITMDHPHDTDIVEFLNGDIITGGEVTFSNPSVLPFWNDVRVQDTVFVLNQALKTSPHARIGMLGHSFGGSAVLSSMVKDGRISAGINFDGGLWGDAVNTGLGGRKKPQPYLQWGAYTHNRHNDTSWETLWKAMERLHPHAWKKELGIPAGRHNTFSDFPAIIDAGGVREVIGKASIDVLVGDIPAARSLEFIKVYVHDFFQFSLFGKDEGLLRGPSSKYPEVVFLD</sequence>
<dbReference type="EC" id="3.1.1.47" evidence="1"/>
<dbReference type="EMBL" id="ABSU01000022">
    <property type="protein sequence ID" value="EFE31356.1"/>
    <property type="molecule type" value="Genomic_DNA"/>
</dbReference>
<dbReference type="RefSeq" id="XP_003011996.1">
    <property type="nucleotide sequence ID" value="XM_003011950.1"/>
</dbReference>
<dbReference type="SMR" id="D4AZY1"/>
<dbReference type="ESTHER" id="artbc-a1751">
    <property type="family name" value="PAF-Acetylhydrolase"/>
</dbReference>
<dbReference type="GeneID" id="9519320"/>
<dbReference type="KEGG" id="abe:ARB_01751"/>
<dbReference type="eggNOG" id="KOG3847">
    <property type="taxonomic scope" value="Eukaryota"/>
</dbReference>
<dbReference type="HOGENOM" id="CLU_026278_0_0_1"/>
<dbReference type="OMA" id="PHDTDIV"/>
<dbReference type="OrthoDB" id="2363873at2759"/>
<dbReference type="Proteomes" id="UP000008866">
    <property type="component" value="Unassembled WGS sequence"/>
</dbReference>
<dbReference type="GO" id="GO:0005576">
    <property type="term" value="C:extracellular region"/>
    <property type="evidence" value="ECO:0007669"/>
    <property type="project" value="UniProtKB-SubCell"/>
</dbReference>
<dbReference type="GO" id="GO:0003847">
    <property type="term" value="F:1-alkyl-2-acetylglycerophosphocholine esterase activity"/>
    <property type="evidence" value="ECO:0007669"/>
    <property type="project" value="UniProtKB-EC"/>
</dbReference>
<dbReference type="GO" id="GO:0016042">
    <property type="term" value="P:lipid catabolic process"/>
    <property type="evidence" value="ECO:0007669"/>
    <property type="project" value="UniProtKB-KW"/>
</dbReference>
<dbReference type="Gene3D" id="3.40.50.1820">
    <property type="entry name" value="alpha/beta hydrolase"/>
    <property type="match status" value="1"/>
</dbReference>
<dbReference type="InterPro" id="IPR029058">
    <property type="entry name" value="AB_hydrolase_fold"/>
</dbReference>
<dbReference type="PANTHER" id="PTHR10272:SF14">
    <property type="entry name" value="PAF ACETYLHYDROLASE FAMILY PROTEIN"/>
    <property type="match status" value="1"/>
</dbReference>
<dbReference type="PANTHER" id="PTHR10272">
    <property type="entry name" value="PLATELET-ACTIVATING FACTOR ACETYLHYDROLASE"/>
    <property type="match status" value="1"/>
</dbReference>
<dbReference type="Pfam" id="PF03403">
    <property type="entry name" value="PAF-AH_p_II"/>
    <property type="match status" value="2"/>
</dbReference>
<dbReference type="SUPFAM" id="SSF53474">
    <property type="entry name" value="alpha/beta-Hydrolases"/>
    <property type="match status" value="1"/>
</dbReference>
<name>A1751_ARTBC</name>
<keyword id="KW-0325">Glycoprotein</keyword>
<keyword id="KW-0378">Hydrolase</keyword>
<keyword id="KW-0442">Lipid degradation</keyword>
<keyword id="KW-0443">Lipid metabolism</keyword>
<keyword id="KW-1185">Reference proteome</keyword>
<keyword id="KW-0964">Secreted</keyword>
<keyword id="KW-0732">Signal</keyword>
<comment type="catalytic activity">
    <reaction evidence="1">
        <text>a 1-O-alkyl-2-acetyl-sn-glycero-3-phosphocholine + H2O = a 1-O-alkyl-sn-glycero-3-phosphocholine + acetate + H(+)</text>
        <dbReference type="Rhea" id="RHEA:17777"/>
        <dbReference type="ChEBI" id="CHEBI:15377"/>
        <dbReference type="ChEBI" id="CHEBI:15378"/>
        <dbReference type="ChEBI" id="CHEBI:30089"/>
        <dbReference type="ChEBI" id="CHEBI:30909"/>
        <dbReference type="ChEBI" id="CHEBI:36707"/>
        <dbReference type="EC" id="3.1.1.47"/>
    </reaction>
</comment>
<comment type="subcellular location">
    <subcellularLocation>
        <location evidence="4">Secreted</location>
    </subcellularLocation>
</comment>
<comment type="similarity">
    <text evidence="5">Belongs to the AB hydrolase superfamily. Lipase family.</text>
</comment>